<keyword id="KW-0028">Amino-acid biosynthesis</keyword>
<keyword id="KW-0067">ATP-binding</keyword>
<keyword id="KW-0963">Cytoplasm</keyword>
<keyword id="KW-0418">Kinase</keyword>
<keyword id="KW-0547">Nucleotide-binding</keyword>
<keyword id="KW-0641">Proline biosynthesis</keyword>
<keyword id="KW-1185">Reference proteome</keyword>
<keyword id="KW-0808">Transferase</keyword>
<protein>
    <recommendedName>
        <fullName evidence="1">Glutamate 5-kinase</fullName>
        <ecNumber evidence="1">2.7.2.11</ecNumber>
    </recommendedName>
    <alternativeName>
        <fullName evidence="1">Gamma-glutamyl kinase</fullName>
        <shortName evidence="1">GK</shortName>
    </alternativeName>
</protein>
<reference key="1">
    <citation type="journal article" date="2002" name="Nucleic Acids Res.">
        <title>Genome sequence of Shigella flexneri 2a: insights into pathogenicity through comparison with genomes of Escherichia coli K12 and O157.</title>
        <authorList>
            <person name="Jin Q."/>
            <person name="Yuan Z."/>
            <person name="Xu J."/>
            <person name="Wang Y."/>
            <person name="Shen Y."/>
            <person name="Lu W."/>
            <person name="Wang J."/>
            <person name="Liu H."/>
            <person name="Yang J."/>
            <person name="Yang F."/>
            <person name="Zhang X."/>
            <person name="Zhang J."/>
            <person name="Yang G."/>
            <person name="Wu H."/>
            <person name="Qu D."/>
            <person name="Dong J."/>
            <person name="Sun L."/>
            <person name="Xue Y."/>
            <person name="Zhao A."/>
            <person name="Gao Y."/>
            <person name="Zhu J."/>
            <person name="Kan B."/>
            <person name="Ding K."/>
            <person name="Chen S."/>
            <person name="Cheng H."/>
            <person name="Yao Z."/>
            <person name="He B."/>
            <person name="Chen R."/>
            <person name="Ma D."/>
            <person name="Qiang B."/>
            <person name="Wen Y."/>
            <person name="Hou Y."/>
            <person name="Yu J."/>
        </authorList>
    </citation>
    <scope>NUCLEOTIDE SEQUENCE [LARGE SCALE GENOMIC DNA]</scope>
    <source>
        <strain>301 / Serotype 2a</strain>
    </source>
</reference>
<reference key="2">
    <citation type="journal article" date="2003" name="Infect. Immun.">
        <title>Complete genome sequence and comparative genomics of Shigella flexneri serotype 2a strain 2457T.</title>
        <authorList>
            <person name="Wei J."/>
            <person name="Goldberg M.B."/>
            <person name="Burland V."/>
            <person name="Venkatesan M.M."/>
            <person name="Deng W."/>
            <person name="Fournier G."/>
            <person name="Mayhew G.F."/>
            <person name="Plunkett G. III"/>
            <person name="Rose D.J."/>
            <person name="Darling A."/>
            <person name="Mau B."/>
            <person name="Perna N.T."/>
            <person name="Payne S.M."/>
            <person name="Runyen-Janecky L.J."/>
            <person name="Zhou S."/>
            <person name="Schwartz D.C."/>
            <person name="Blattner F.R."/>
        </authorList>
    </citation>
    <scope>NUCLEOTIDE SEQUENCE [LARGE SCALE GENOMIC DNA]</scope>
    <source>
        <strain>ATCC 700930 / 2457T / Serotype 2a</strain>
    </source>
</reference>
<name>PROB_SHIFL</name>
<sequence length="367" mass="39126">MSDSQTLVVKLGTSVLTGGSRRLNRAHIVELVRQCAQLHAAGHRIVIVTSGAIAAGREHLGYPELPATIASKQLLAAVGQSRLIQLWEQLFSIYGIHVGQMLLTRADMEDRERFLNARDTLRALLDNNIVPVINENDAVATAEIKVGDNDNLSALAAILAGADKLLLLTDQKGLYTADPRRNPQAELIKDVYGIDDALRAIAGDSVSGLGTGGMSTKLQAADVACRAGIDTIIAAGSKPGVIGDVMEGISVGTLFHAQATPLENRKRWIFGAPPAGEITVDEGATAAILERGSSLLPKGIKSVTGNFSRGEVIRICNLEGRDIAHGVSRYNSDALRRIAGHHSQEIDAILGYEYGPVAVHRDDMITR</sequence>
<accession>Q7UDL2</accession>
<accession>Q83M80</accession>
<gene>
    <name evidence="1" type="primary">proB</name>
    <name type="ordered locus">SF0292</name>
    <name type="ordered locus">S0313</name>
</gene>
<comment type="function">
    <text evidence="1">Catalyzes the transfer of a phosphate group to glutamate to form L-glutamate 5-phosphate.</text>
</comment>
<comment type="catalytic activity">
    <reaction evidence="1">
        <text>L-glutamate + ATP = L-glutamyl 5-phosphate + ADP</text>
        <dbReference type="Rhea" id="RHEA:14877"/>
        <dbReference type="ChEBI" id="CHEBI:29985"/>
        <dbReference type="ChEBI" id="CHEBI:30616"/>
        <dbReference type="ChEBI" id="CHEBI:58274"/>
        <dbReference type="ChEBI" id="CHEBI:456216"/>
        <dbReference type="EC" id="2.7.2.11"/>
    </reaction>
</comment>
<comment type="pathway">
    <text evidence="1">Amino-acid biosynthesis; L-proline biosynthesis; L-glutamate 5-semialdehyde from L-glutamate: step 1/2.</text>
</comment>
<comment type="subcellular location">
    <subcellularLocation>
        <location evidence="1">Cytoplasm</location>
    </subcellularLocation>
</comment>
<comment type="similarity">
    <text evidence="1">Belongs to the glutamate 5-kinase family.</text>
</comment>
<proteinExistence type="inferred from homology"/>
<evidence type="ECO:0000255" key="1">
    <source>
        <dbReference type="HAMAP-Rule" id="MF_00456"/>
    </source>
</evidence>
<dbReference type="EC" id="2.7.2.11" evidence="1"/>
<dbReference type="EMBL" id="AE005674">
    <property type="protein sequence ID" value="AAN41951.2"/>
    <property type="molecule type" value="Genomic_DNA"/>
</dbReference>
<dbReference type="EMBL" id="AE014073">
    <property type="protein sequence ID" value="AAP15838.1"/>
    <property type="molecule type" value="Genomic_DNA"/>
</dbReference>
<dbReference type="RefSeq" id="NP_706244.2">
    <property type="nucleotide sequence ID" value="NC_004337.2"/>
</dbReference>
<dbReference type="RefSeq" id="WP_001285281.1">
    <property type="nucleotide sequence ID" value="NZ_WPGW01000055.1"/>
</dbReference>
<dbReference type="SMR" id="Q7UDL2"/>
<dbReference type="STRING" id="198214.SF0292"/>
<dbReference type="PaxDb" id="198214-SF0292"/>
<dbReference type="GeneID" id="1027426"/>
<dbReference type="KEGG" id="sfl:SF0292"/>
<dbReference type="KEGG" id="sfx:S0313"/>
<dbReference type="PATRIC" id="fig|198214.7.peg.334"/>
<dbReference type="HOGENOM" id="CLU_025400_2_0_6"/>
<dbReference type="UniPathway" id="UPA00098">
    <property type="reaction ID" value="UER00359"/>
</dbReference>
<dbReference type="Proteomes" id="UP000001006">
    <property type="component" value="Chromosome"/>
</dbReference>
<dbReference type="Proteomes" id="UP000002673">
    <property type="component" value="Chromosome"/>
</dbReference>
<dbReference type="GO" id="GO:0005829">
    <property type="term" value="C:cytosol"/>
    <property type="evidence" value="ECO:0007669"/>
    <property type="project" value="TreeGrafter"/>
</dbReference>
<dbReference type="GO" id="GO:0005524">
    <property type="term" value="F:ATP binding"/>
    <property type="evidence" value="ECO:0007669"/>
    <property type="project" value="UniProtKB-KW"/>
</dbReference>
<dbReference type="GO" id="GO:0004349">
    <property type="term" value="F:glutamate 5-kinase activity"/>
    <property type="evidence" value="ECO:0007669"/>
    <property type="project" value="UniProtKB-UniRule"/>
</dbReference>
<dbReference type="GO" id="GO:0003723">
    <property type="term" value="F:RNA binding"/>
    <property type="evidence" value="ECO:0007669"/>
    <property type="project" value="InterPro"/>
</dbReference>
<dbReference type="GO" id="GO:0055129">
    <property type="term" value="P:L-proline biosynthetic process"/>
    <property type="evidence" value="ECO:0007669"/>
    <property type="project" value="UniProtKB-UniRule"/>
</dbReference>
<dbReference type="CDD" id="cd04242">
    <property type="entry name" value="AAK_G5K_ProB"/>
    <property type="match status" value="1"/>
</dbReference>
<dbReference type="CDD" id="cd21157">
    <property type="entry name" value="PUA_G5K"/>
    <property type="match status" value="1"/>
</dbReference>
<dbReference type="FunFam" id="2.30.130.10:FF:000003">
    <property type="entry name" value="Glutamate 5-kinase"/>
    <property type="match status" value="1"/>
</dbReference>
<dbReference type="FunFam" id="3.40.1160.10:FF:000006">
    <property type="entry name" value="Glutamate 5-kinase"/>
    <property type="match status" value="1"/>
</dbReference>
<dbReference type="Gene3D" id="3.40.1160.10">
    <property type="entry name" value="Acetylglutamate kinase-like"/>
    <property type="match status" value="2"/>
</dbReference>
<dbReference type="Gene3D" id="2.30.130.10">
    <property type="entry name" value="PUA domain"/>
    <property type="match status" value="1"/>
</dbReference>
<dbReference type="HAMAP" id="MF_00456">
    <property type="entry name" value="ProB"/>
    <property type="match status" value="1"/>
</dbReference>
<dbReference type="InterPro" id="IPR036393">
    <property type="entry name" value="AceGlu_kinase-like_sf"/>
</dbReference>
<dbReference type="InterPro" id="IPR001048">
    <property type="entry name" value="Asp/Glu/Uridylate_kinase"/>
</dbReference>
<dbReference type="InterPro" id="IPR041739">
    <property type="entry name" value="G5K_ProB"/>
</dbReference>
<dbReference type="InterPro" id="IPR001057">
    <property type="entry name" value="Glu/AcGlu_kinase"/>
</dbReference>
<dbReference type="InterPro" id="IPR011529">
    <property type="entry name" value="Glu_5kinase"/>
</dbReference>
<dbReference type="InterPro" id="IPR005715">
    <property type="entry name" value="Glu_5kinase/COase_Synthase"/>
</dbReference>
<dbReference type="InterPro" id="IPR019797">
    <property type="entry name" value="Glutamate_5-kinase_CS"/>
</dbReference>
<dbReference type="InterPro" id="IPR002478">
    <property type="entry name" value="PUA"/>
</dbReference>
<dbReference type="InterPro" id="IPR015947">
    <property type="entry name" value="PUA-like_sf"/>
</dbReference>
<dbReference type="InterPro" id="IPR036974">
    <property type="entry name" value="PUA_sf"/>
</dbReference>
<dbReference type="NCBIfam" id="TIGR01027">
    <property type="entry name" value="proB"/>
    <property type="match status" value="1"/>
</dbReference>
<dbReference type="PANTHER" id="PTHR43654">
    <property type="entry name" value="GLUTAMATE 5-KINASE"/>
    <property type="match status" value="1"/>
</dbReference>
<dbReference type="PANTHER" id="PTHR43654:SF1">
    <property type="entry name" value="ISOPENTENYL PHOSPHATE KINASE"/>
    <property type="match status" value="1"/>
</dbReference>
<dbReference type="Pfam" id="PF00696">
    <property type="entry name" value="AA_kinase"/>
    <property type="match status" value="1"/>
</dbReference>
<dbReference type="Pfam" id="PF01472">
    <property type="entry name" value="PUA"/>
    <property type="match status" value="1"/>
</dbReference>
<dbReference type="PIRSF" id="PIRSF000729">
    <property type="entry name" value="GK"/>
    <property type="match status" value="1"/>
</dbReference>
<dbReference type="PRINTS" id="PR00474">
    <property type="entry name" value="GLU5KINASE"/>
</dbReference>
<dbReference type="SMART" id="SM00359">
    <property type="entry name" value="PUA"/>
    <property type="match status" value="1"/>
</dbReference>
<dbReference type="SUPFAM" id="SSF53633">
    <property type="entry name" value="Carbamate kinase-like"/>
    <property type="match status" value="1"/>
</dbReference>
<dbReference type="SUPFAM" id="SSF88697">
    <property type="entry name" value="PUA domain-like"/>
    <property type="match status" value="1"/>
</dbReference>
<dbReference type="PROSITE" id="PS00902">
    <property type="entry name" value="GLUTAMATE_5_KINASE"/>
    <property type="match status" value="1"/>
</dbReference>
<dbReference type="PROSITE" id="PS50890">
    <property type="entry name" value="PUA"/>
    <property type="match status" value="1"/>
</dbReference>
<feature type="chain" id="PRO_0000109725" description="Glutamate 5-kinase">
    <location>
        <begin position="1"/>
        <end position="367"/>
    </location>
</feature>
<feature type="domain" description="PUA" evidence="1">
    <location>
        <begin position="275"/>
        <end position="353"/>
    </location>
</feature>
<feature type="binding site" evidence="1">
    <location>
        <position position="10"/>
    </location>
    <ligand>
        <name>ATP</name>
        <dbReference type="ChEBI" id="CHEBI:30616"/>
    </ligand>
</feature>
<feature type="binding site" evidence="1">
    <location>
        <position position="50"/>
    </location>
    <ligand>
        <name>substrate</name>
    </ligand>
</feature>
<feature type="binding site" evidence="1">
    <location>
        <position position="137"/>
    </location>
    <ligand>
        <name>substrate</name>
    </ligand>
</feature>
<feature type="binding site" evidence="1">
    <location>
        <position position="149"/>
    </location>
    <ligand>
        <name>substrate</name>
    </ligand>
</feature>
<feature type="binding site" evidence="1">
    <location>
        <begin position="169"/>
        <end position="170"/>
    </location>
    <ligand>
        <name>ATP</name>
        <dbReference type="ChEBI" id="CHEBI:30616"/>
    </ligand>
</feature>
<feature type="binding site" evidence="1">
    <location>
        <begin position="211"/>
        <end position="217"/>
    </location>
    <ligand>
        <name>ATP</name>
        <dbReference type="ChEBI" id="CHEBI:30616"/>
    </ligand>
</feature>
<organism>
    <name type="scientific">Shigella flexneri</name>
    <dbReference type="NCBI Taxonomy" id="623"/>
    <lineage>
        <taxon>Bacteria</taxon>
        <taxon>Pseudomonadati</taxon>
        <taxon>Pseudomonadota</taxon>
        <taxon>Gammaproteobacteria</taxon>
        <taxon>Enterobacterales</taxon>
        <taxon>Enterobacteriaceae</taxon>
        <taxon>Shigella</taxon>
    </lineage>
</organism>